<gene>
    <name type="ordered locus">SpyM3_0270</name>
</gene>
<accession>P0DG88</accession>
<accession>P58128</accession>
<accession>P67308</accession>
<protein>
    <recommendedName>
        <fullName evidence="1">Putative membrane protein insertion efficiency factor</fullName>
    </recommendedName>
</protein>
<comment type="function">
    <text evidence="1">Could be involved in insertion of integral membrane proteins into the membrane.</text>
</comment>
<comment type="subcellular location">
    <subcellularLocation>
        <location evidence="1">Cell membrane</location>
        <topology evidence="1">Peripheral membrane protein</topology>
        <orientation evidence="1">Cytoplasmic side</orientation>
    </subcellularLocation>
</comment>
<comment type="similarity">
    <text evidence="1">Belongs to the UPF0161 family.</text>
</comment>
<comment type="sequence caution" evidence="2">
    <conflict type="erroneous initiation">
        <sequence resource="EMBL-CDS" id="AAM78877"/>
    </conflict>
</comment>
<evidence type="ECO:0000255" key="1">
    <source>
        <dbReference type="HAMAP-Rule" id="MF_00386"/>
    </source>
</evidence>
<evidence type="ECO:0000305" key="2"/>
<feature type="chain" id="PRO_0000171884" description="Putative membrane protein insertion efficiency factor">
    <location>
        <begin position="1"/>
        <end position="86"/>
    </location>
</feature>
<dbReference type="EMBL" id="AE014074">
    <property type="protein sequence ID" value="AAM78877.1"/>
    <property type="status" value="ALT_INIT"/>
    <property type="molecule type" value="Genomic_DNA"/>
</dbReference>
<dbReference type="KEGG" id="spg:SpyM3_0270"/>
<dbReference type="HOGENOM" id="CLU_144811_5_2_9"/>
<dbReference type="Proteomes" id="UP000000564">
    <property type="component" value="Chromosome"/>
</dbReference>
<dbReference type="GO" id="GO:0005886">
    <property type="term" value="C:plasma membrane"/>
    <property type="evidence" value="ECO:0007669"/>
    <property type="project" value="UniProtKB-SubCell"/>
</dbReference>
<dbReference type="HAMAP" id="MF_00386">
    <property type="entry name" value="UPF0161_YidD"/>
    <property type="match status" value="1"/>
</dbReference>
<dbReference type="InterPro" id="IPR002696">
    <property type="entry name" value="Membr_insert_effic_factor_YidD"/>
</dbReference>
<dbReference type="NCBIfam" id="TIGR00278">
    <property type="entry name" value="membrane protein insertion efficiency factor YidD"/>
    <property type="match status" value="1"/>
</dbReference>
<dbReference type="PANTHER" id="PTHR33383">
    <property type="entry name" value="MEMBRANE PROTEIN INSERTION EFFICIENCY FACTOR-RELATED"/>
    <property type="match status" value="1"/>
</dbReference>
<dbReference type="PANTHER" id="PTHR33383:SF1">
    <property type="entry name" value="MEMBRANE PROTEIN INSERTION EFFICIENCY FACTOR-RELATED"/>
    <property type="match status" value="1"/>
</dbReference>
<dbReference type="Pfam" id="PF01809">
    <property type="entry name" value="YidD"/>
    <property type="match status" value="1"/>
</dbReference>
<dbReference type="SMART" id="SM01234">
    <property type="entry name" value="Haemolytic"/>
    <property type="match status" value="1"/>
</dbReference>
<name>YIDD_STRP3</name>
<reference key="1">
    <citation type="journal article" date="2002" name="Proc. Natl. Acad. Sci. U.S.A.">
        <title>Genome sequence of a serotype M3 strain of group A Streptococcus: phage-encoded toxins, the high-virulence phenotype, and clone emergence.</title>
        <authorList>
            <person name="Beres S.B."/>
            <person name="Sylva G.L."/>
            <person name="Barbian K.D."/>
            <person name="Lei B."/>
            <person name="Hoff J.S."/>
            <person name="Mammarella N.D."/>
            <person name="Liu M.-Y."/>
            <person name="Smoot J.C."/>
            <person name="Porcella S.F."/>
            <person name="Parkins L.D."/>
            <person name="Campbell D.S."/>
            <person name="Smith T.M."/>
            <person name="McCormick J.K."/>
            <person name="Leung D.Y.M."/>
            <person name="Schlievert P.M."/>
            <person name="Musser J.M."/>
        </authorList>
    </citation>
    <scope>NUCLEOTIDE SEQUENCE [LARGE SCALE GENOMIC DNA]</scope>
    <source>
        <strain>ATCC BAA-595 / MGAS315</strain>
    </source>
</reference>
<sequence>MKKLLIVSVKAYQKYISPLSPPSCRYKPTCSAYMLTAIEKHGTKGILMGIARILRCHPFVAGGVDPVPEDFSLMRNKNTSKNAEKA</sequence>
<organism>
    <name type="scientific">Streptococcus pyogenes serotype M3 (strain ATCC BAA-595 / MGAS315)</name>
    <dbReference type="NCBI Taxonomy" id="198466"/>
    <lineage>
        <taxon>Bacteria</taxon>
        <taxon>Bacillati</taxon>
        <taxon>Bacillota</taxon>
        <taxon>Bacilli</taxon>
        <taxon>Lactobacillales</taxon>
        <taxon>Streptococcaceae</taxon>
        <taxon>Streptococcus</taxon>
    </lineage>
</organism>
<proteinExistence type="inferred from homology"/>
<keyword id="KW-1003">Cell membrane</keyword>
<keyword id="KW-0472">Membrane</keyword>